<protein>
    <recommendedName>
        <fullName>Transcription elongation factor SPT4</fullName>
    </recommendedName>
    <alternativeName>
        <fullName>Chromatin elongation factor SPT4</fullName>
    </alternativeName>
</protein>
<sequence length="102" mass="11224">MSTDRACMLCGLVQSTAEFNRNGCPNCQSIFEEAGVSAVECTSPSFEGLVGMCKPSRSWVARWMSIDSYIPGMYAVKIDGRLPIEVTELLPHYKPRDGSQVD</sequence>
<keyword id="KW-0137">Centromere</keyword>
<keyword id="KW-0158">Chromosome</keyword>
<keyword id="KW-0479">Metal-binding</keyword>
<keyword id="KW-0507">mRNA processing</keyword>
<keyword id="KW-0539">Nucleus</keyword>
<keyword id="KW-1185">Reference proteome</keyword>
<keyword id="KW-0804">Transcription</keyword>
<keyword id="KW-0862">Zinc</keyword>
<keyword id="KW-0863">Zinc-finger</keyword>
<name>SPT4_KLULA</name>
<evidence type="ECO:0000250" key="1"/>
<evidence type="ECO:0000255" key="2"/>
<evidence type="ECO:0000305" key="3"/>
<comment type="function">
    <text evidence="1">The SPT4-SPT5 complex mediates both activation and inhibition of transcription elongation, and plays a role in pre-mRNA processing. This complex seems to be important for the stability of the RNA polymerase II elongation machinery on the chromatin template but not for the inherent ability of this machinery to translocate down the gene (By similarity).</text>
</comment>
<comment type="subunit">
    <text evidence="1">Component of the SPT4-SPT5 complex. Interacts with RNA polymerase II (By similarity).</text>
</comment>
<comment type="subcellular location">
    <subcellularLocation>
        <location evidence="1">Nucleus</location>
    </subcellularLocation>
    <subcellularLocation>
        <location evidence="1">Chromosome</location>
        <location evidence="1">Centromere</location>
    </subcellularLocation>
    <text evidence="1">Centromere and heterochromatin.</text>
</comment>
<comment type="similarity">
    <text evidence="3">Belongs to the SPT4 family.</text>
</comment>
<feature type="chain" id="PRO_0000210337" description="Transcription elongation factor SPT4">
    <location>
        <begin position="1"/>
        <end position="102"/>
    </location>
</feature>
<feature type="zinc finger region" description="C4-type" evidence="2">
    <location>
        <begin position="7"/>
        <end position="27"/>
    </location>
</feature>
<proteinExistence type="inferred from homology"/>
<accession>P81205</accession>
<reference key="1">
    <citation type="journal article" date="1998" name="Curr. Genet.">
        <title>Identification and functional analysis of a Kluyveromyces lactis homologue of the SPT4 gene of Saccharomyces cerevisiae.</title>
        <authorList>
            <person name="Hikkel I."/>
            <person name="Gbelska Y."/>
            <person name="Subik J."/>
        </authorList>
    </citation>
    <scope>NUCLEOTIDE SEQUENCE [GENOMIC DNA]</scope>
    <source>
        <strain>ATCC MYA-539 / JBD100</strain>
    </source>
</reference>
<reference key="2">
    <citation type="journal article" date="2004" name="Nature">
        <title>Genome evolution in yeasts.</title>
        <authorList>
            <person name="Dujon B."/>
            <person name="Sherman D."/>
            <person name="Fischer G."/>
            <person name="Durrens P."/>
            <person name="Casaregola S."/>
            <person name="Lafontaine I."/>
            <person name="de Montigny J."/>
            <person name="Marck C."/>
            <person name="Neuveglise C."/>
            <person name="Talla E."/>
            <person name="Goffard N."/>
            <person name="Frangeul L."/>
            <person name="Aigle M."/>
            <person name="Anthouard V."/>
            <person name="Babour A."/>
            <person name="Barbe V."/>
            <person name="Barnay S."/>
            <person name="Blanchin S."/>
            <person name="Beckerich J.-M."/>
            <person name="Beyne E."/>
            <person name="Bleykasten C."/>
            <person name="Boisrame A."/>
            <person name="Boyer J."/>
            <person name="Cattolico L."/>
            <person name="Confanioleri F."/>
            <person name="de Daruvar A."/>
            <person name="Despons L."/>
            <person name="Fabre E."/>
            <person name="Fairhead C."/>
            <person name="Ferry-Dumazet H."/>
            <person name="Groppi A."/>
            <person name="Hantraye F."/>
            <person name="Hennequin C."/>
            <person name="Jauniaux N."/>
            <person name="Joyet P."/>
            <person name="Kachouri R."/>
            <person name="Kerrest A."/>
            <person name="Koszul R."/>
            <person name="Lemaire M."/>
            <person name="Lesur I."/>
            <person name="Ma L."/>
            <person name="Muller H."/>
            <person name="Nicaud J.-M."/>
            <person name="Nikolski M."/>
            <person name="Oztas S."/>
            <person name="Ozier-Kalogeropoulos O."/>
            <person name="Pellenz S."/>
            <person name="Potier S."/>
            <person name="Richard G.-F."/>
            <person name="Straub M.-L."/>
            <person name="Suleau A."/>
            <person name="Swennen D."/>
            <person name="Tekaia F."/>
            <person name="Wesolowski-Louvel M."/>
            <person name="Westhof E."/>
            <person name="Wirth B."/>
            <person name="Zeniou-Meyer M."/>
            <person name="Zivanovic Y."/>
            <person name="Bolotin-Fukuhara M."/>
            <person name="Thierry A."/>
            <person name="Bouchier C."/>
            <person name="Caudron B."/>
            <person name="Scarpelli C."/>
            <person name="Gaillardin C."/>
            <person name="Weissenbach J."/>
            <person name="Wincker P."/>
            <person name="Souciet J.-L."/>
        </authorList>
    </citation>
    <scope>NUCLEOTIDE SEQUENCE [LARGE SCALE GENOMIC DNA]</scope>
    <source>
        <strain>ATCC 8585 / CBS 2359 / DSM 70799 / NBRC 1267 / NRRL Y-1140 / WM37</strain>
    </source>
</reference>
<organism>
    <name type="scientific">Kluyveromyces lactis (strain ATCC 8585 / CBS 2359 / DSM 70799 / NBRC 1267 / NRRL Y-1140 / WM37)</name>
    <name type="common">Yeast</name>
    <name type="synonym">Candida sphaerica</name>
    <dbReference type="NCBI Taxonomy" id="284590"/>
    <lineage>
        <taxon>Eukaryota</taxon>
        <taxon>Fungi</taxon>
        <taxon>Dikarya</taxon>
        <taxon>Ascomycota</taxon>
        <taxon>Saccharomycotina</taxon>
        <taxon>Saccharomycetes</taxon>
        <taxon>Saccharomycetales</taxon>
        <taxon>Saccharomycetaceae</taxon>
        <taxon>Kluyveromyces</taxon>
    </lineage>
</organism>
<gene>
    <name type="primary">SPT4</name>
    <name type="ordered locus">KLLA0B07997g</name>
</gene>
<dbReference type="EMBL" id="CR382122">
    <property type="protein sequence ID" value="CAH02279.1"/>
    <property type="molecule type" value="Genomic_DNA"/>
</dbReference>
<dbReference type="RefSeq" id="XP_451886.1">
    <property type="nucleotide sequence ID" value="XM_451886.1"/>
</dbReference>
<dbReference type="SMR" id="P81205"/>
<dbReference type="FunCoup" id="P81205">
    <property type="interactions" value="471"/>
</dbReference>
<dbReference type="STRING" id="284590.P81205"/>
<dbReference type="PaxDb" id="284590-P81205"/>
<dbReference type="KEGG" id="kla:KLLA0_B07997g"/>
<dbReference type="eggNOG" id="KOG3490">
    <property type="taxonomic scope" value="Eukaryota"/>
</dbReference>
<dbReference type="HOGENOM" id="CLU_138052_2_1_1"/>
<dbReference type="InParanoid" id="P81205"/>
<dbReference type="OMA" id="FDGMIAV"/>
<dbReference type="Proteomes" id="UP000000598">
    <property type="component" value="Chromosome B"/>
</dbReference>
<dbReference type="GO" id="GO:0000775">
    <property type="term" value="C:chromosome, centromeric region"/>
    <property type="evidence" value="ECO:0007669"/>
    <property type="project" value="UniProtKB-SubCell"/>
</dbReference>
<dbReference type="GO" id="GO:0032044">
    <property type="term" value="C:DSIF complex"/>
    <property type="evidence" value="ECO:0007669"/>
    <property type="project" value="TreeGrafter"/>
</dbReference>
<dbReference type="GO" id="GO:0000993">
    <property type="term" value="F:RNA polymerase II complex binding"/>
    <property type="evidence" value="ECO:0007669"/>
    <property type="project" value="TreeGrafter"/>
</dbReference>
<dbReference type="GO" id="GO:0008270">
    <property type="term" value="F:zinc ion binding"/>
    <property type="evidence" value="ECO:0007669"/>
    <property type="project" value="UniProtKB-KW"/>
</dbReference>
<dbReference type="GO" id="GO:0006397">
    <property type="term" value="P:mRNA processing"/>
    <property type="evidence" value="ECO:0007669"/>
    <property type="project" value="UniProtKB-KW"/>
</dbReference>
<dbReference type="GO" id="GO:0006355">
    <property type="term" value="P:regulation of DNA-templated transcription"/>
    <property type="evidence" value="ECO:0007669"/>
    <property type="project" value="InterPro"/>
</dbReference>
<dbReference type="GO" id="GO:0140673">
    <property type="term" value="P:transcription elongation-coupled chromatin remodeling"/>
    <property type="evidence" value="ECO:0007669"/>
    <property type="project" value="InterPro"/>
</dbReference>
<dbReference type="CDD" id="cd07973">
    <property type="entry name" value="Spt4"/>
    <property type="match status" value="1"/>
</dbReference>
<dbReference type="FunFam" id="3.30.40.210:FF:000003">
    <property type="entry name" value="Transcription elongation factor SPT4"/>
    <property type="match status" value="1"/>
</dbReference>
<dbReference type="Gene3D" id="3.30.40.210">
    <property type="match status" value="1"/>
</dbReference>
<dbReference type="InterPro" id="IPR029040">
    <property type="entry name" value="RPABC4/Spt4"/>
</dbReference>
<dbReference type="InterPro" id="IPR009287">
    <property type="entry name" value="Spt4"/>
</dbReference>
<dbReference type="InterPro" id="IPR022800">
    <property type="entry name" value="Spt4/RpoE2_Znf"/>
</dbReference>
<dbReference type="InterPro" id="IPR038510">
    <property type="entry name" value="Spt4_sf"/>
</dbReference>
<dbReference type="PANTHER" id="PTHR12882">
    <property type="entry name" value="SUPPRESSOR OF TY 4"/>
    <property type="match status" value="1"/>
</dbReference>
<dbReference type="PANTHER" id="PTHR12882:SF1">
    <property type="entry name" value="TRANSCRIPTION ELONGATION FACTOR SPT4"/>
    <property type="match status" value="1"/>
</dbReference>
<dbReference type="Pfam" id="PF06093">
    <property type="entry name" value="Spt4"/>
    <property type="match status" value="1"/>
</dbReference>
<dbReference type="PIRSF" id="PIRSF025023">
    <property type="entry name" value="Spt4"/>
    <property type="match status" value="1"/>
</dbReference>
<dbReference type="SMART" id="SM01389">
    <property type="entry name" value="Spt4"/>
    <property type="match status" value="1"/>
</dbReference>
<dbReference type="SUPFAM" id="SSF63393">
    <property type="entry name" value="RNA polymerase subunits"/>
    <property type="match status" value="1"/>
</dbReference>